<feature type="chain" id="PRO_1000132186" description="Probable transcriptional regulatory protein Dole_0371">
    <location>
        <begin position="1"/>
        <end position="246"/>
    </location>
</feature>
<gene>
    <name type="ordered locus">Dole_0371</name>
</gene>
<evidence type="ECO:0000255" key="1">
    <source>
        <dbReference type="HAMAP-Rule" id="MF_00693"/>
    </source>
</evidence>
<comment type="subcellular location">
    <subcellularLocation>
        <location evidence="1">Cytoplasm</location>
    </subcellularLocation>
</comment>
<comment type="similarity">
    <text evidence="1">Belongs to the TACO1 family.</text>
</comment>
<proteinExistence type="inferred from homology"/>
<keyword id="KW-0963">Cytoplasm</keyword>
<keyword id="KW-0238">DNA-binding</keyword>
<keyword id="KW-1185">Reference proteome</keyword>
<keyword id="KW-0804">Transcription</keyword>
<keyword id="KW-0805">Transcription regulation</keyword>
<name>Y371_DESOH</name>
<sequence>MSGHNKWSSIKHKKGAADAKRGKVFTKLIKEITLAARTGGGDPDGNPRLRTAIAAAKDENMPKDNIERAIKKGTGDLEGVNYEENTYEGYGPGGAAVLVESLTDNKNRAVSEIRHIFSKHNGNMGENGCVAWMFDKKGYIEVEKSAAEEDHLMEVAIEAGAEDVRESDDTFEVITEVEDLETVRQALDGASIQYAFAEITMLPQTMVDLDDKTSEQMIRLLDALDDCEDVQKVYTNASLSDSVGEA</sequence>
<organism>
    <name type="scientific">Desulfosudis oleivorans (strain DSM 6200 / JCM 39069 / Hxd3)</name>
    <name type="common">Desulfococcus oleovorans</name>
    <dbReference type="NCBI Taxonomy" id="96561"/>
    <lineage>
        <taxon>Bacteria</taxon>
        <taxon>Pseudomonadati</taxon>
        <taxon>Thermodesulfobacteriota</taxon>
        <taxon>Desulfobacteria</taxon>
        <taxon>Desulfobacterales</taxon>
        <taxon>Desulfosudaceae</taxon>
        <taxon>Desulfosudis</taxon>
    </lineage>
</organism>
<dbReference type="EMBL" id="CP000859">
    <property type="protein sequence ID" value="ABW66181.1"/>
    <property type="molecule type" value="Genomic_DNA"/>
</dbReference>
<dbReference type="RefSeq" id="WP_012173800.1">
    <property type="nucleotide sequence ID" value="NC_009943.1"/>
</dbReference>
<dbReference type="SMR" id="A8ZT17"/>
<dbReference type="STRING" id="96561.Dole_0371"/>
<dbReference type="KEGG" id="dol:Dole_0371"/>
<dbReference type="eggNOG" id="COG0217">
    <property type="taxonomic scope" value="Bacteria"/>
</dbReference>
<dbReference type="HOGENOM" id="CLU_062974_2_2_7"/>
<dbReference type="OrthoDB" id="9781053at2"/>
<dbReference type="Proteomes" id="UP000008561">
    <property type="component" value="Chromosome"/>
</dbReference>
<dbReference type="GO" id="GO:0005829">
    <property type="term" value="C:cytosol"/>
    <property type="evidence" value="ECO:0007669"/>
    <property type="project" value="TreeGrafter"/>
</dbReference>
<dbReference type="GO" id="GO:0003677">
    <property type="term" value="F:DNA binding"/>
    <property type="evidence" value="ECO:0007669"/>
    <property type="project" value="UniProtKB-UniRule"/>
</dbReference>
<dbReference type="GO" id="GO:0006355">
    <property type="term" value="P:regulation of DNA-templated transcription"/>
    <property type="evidence" value="ECO:0007669"/>
    <property type="project" value="UniProtKB-UniRule"/>
</dbReference>
<dbReference type="FunFam" id="1.10.10.200:FF:000002">
    <property type="entry name" value="Probable transcriptional regulatory protein CLM62_37755"/>
    <property type="match status" value="1"/>
</dbReference>
<dbReference type="FunFam" id="3.30.70.980:FF:000002">
    <property type="entry name" value="Probable transcriptional regulatory protein YebC"/>
    <property type="match status" value="1"/>
</dbReference>
<dbReference type="Gene3D" id="1.10.10.200">
    <property type="match status" value="1"/>
</dbReference>
<dbReference type="Gene3D" id="3.30.70.980">
    <property type="match status" value="2"/>
</dbReference>
<dbReference type="HAMAP" id="MF_00693">
    <property type="entry name" value="Transcrip_reg_TACO1"/>
    <property type="match status" value="1"/>
</dbReference>
<dbReference type="InterPro" id="IPR017856">
    <property type="entry name" value="Integrase-like_N"/>
</dbReference>
<dbReference type="InterPro" id="IPR048300">
    <property type="entry name" value="TACO1_YebC-like_2nd/3rd_dom"/>
</dbReference>
<dbReference type="InterPro" id="IPR049083">
    <property type="entry name" value="TACO1_YebC_N"/>
</dbReference>
<dbReference type="InterPro" id="IPR002876">
    <property type="entry name" value="Transcrip_reg_TACO1-like"/>
</dbReference>
<dbReference type="InterPro" id="IPR026564">
    <property type="entry name" value="Transcrip_reg_TACO1-like_dom3"/>
</dbReference>
<dbReference type="InterPro" id="IPR029072">
    <property type="entry name" value="YebC-like"/>
</dbReference>
<dbReference type="NCBIfam" id="NF001030">
    <property type="entry name" value="PRK00110.1"/>
    <property type="match status" value="1"/>
</dbReference>
<dbReference type="NCBIfam" id="NF009044">
    <property type="entry name" value="PRK12378.1"/>
    <property type="match status" value="1"/>
</dbReference>
<dbReference type="NCBIfam" id="TIGR01033">
    <property type="entry name" value="YebC/PmpR family DNA-binding transcriptional regulator"/>
    <property type="match status" value="1"/>
</dbReference>
<dbReference type="PANTHER" id="PTHR12532:SF6">
    <property type="entry name" value="TRANSCRIPTIONAL REGULATORY PROTEIN YEBC-RELATED"/>
    <property type="match status" value="1"/>
</dbReference>
<dbReference type="PANTHER" id="PTHR12532">
    <property type="entry name" value="TRANSLATIONAL ACTIVATOR OF CYTOCHROME C OXIDASE 1"/>
    <property type="match status" value="1"/>
</dbReference>
<dbReference type="Pfam" id="PF20772">
    <property type="entry name" value="TACO1_YebC_N"/>
    <property type="match status" value="1"/>
</dbReference>
<dbReference type="Pfam" id="PF01709">
    <property type="entry name" value="Transcrip_reg"/>
    <property type="match status" value="1"/>
</dbReference>
<dbReference type="SUPFAM" id="SSF75625">
    <property type="entry name" value="YebC-like"/>
    <property type="match status" value="1"/>
</dbReference>
<accession>A8ZT17</accession>
<reference key="1">
    <citation type="submission" date="2007-10" db="EMBL/GenBank/DDBJ databases">
        <title>Complete sequence of Desulfococcus oleovorans Hxd3.</title>
        <authorList>
            <consortium name="US DOE Joint Genome Institute"/>
            <person name="Copeland A."/>
            <person name="Lucas S."/>
            <person name="Lapidus A."/>
            <person name="Barry K."/>
            <person name="Glavina del Rio T."/>
            <person name="Dalin E."/>
            <person name="Tice H."/>
            <person name="Pitluck S."/>
            <person name="Kiss H."/>
            <person name="Brettin T."/>
            <person name="Bruce D."/>
            <person name="Detter J.C."/>
            <person name="Han C."/>
            <person name="Schmutz J."/>
            <person name="Larimer F."/>
            <person name="Land M."/>
            <person name="Hauser L."/>
            <person name="Kyrpides N."/>
            <person name="Kim E."/>
            <person name="Wawrik B."/>
            <person name="Richardson P."/>
        </authorList>
    </citation>
    <scope>NUCLEOTIDE SEQUENCE [LARGE SCALE GENOMIC DNA]</scope>
    <source>
        <strain>DSM 6200 / JCM 39069 / Hxd3</strain>
    </source>
</reference>
<protein>
    <recommendedName>
        <fullName evidence="1">Probable transcriptional regulatory protein Dole_0371</fullName>
    </recommendedName>
</protein>